<name>RS7_ROSCS</name>
<gene>
    <name evidence="1" type="primary">rpsG</name>
    <name type="ordered locus">Rcas_4030</name>
</gene>
<dbReference type="EMBL" id="CP000804">
    <property type="protein sequence ID" value="ABU60063.1"/>
    <property type="molecule type" value="Genomic_DNA"/>
</dbReference>
<dbReference type="RefSeq" id="WP_012122485.1">
    <property type="nucleotide sequence ID" value="NC_009767.1"/>
</dbReference>
<dbReference type="SMR" id="A7NR67"/>
<dbReference type="STRING" id="383372.Rcas_4030"/>
<dbReference type="KEGG" id="rca:Rcas_4030"/>
<dbReference type="eggNOG" id="COG0049">
    <property type="taxonomic scope" value="Bacteria"/>
</dbReference>
<dbReference type="HOGENOM" id="CLU_072226_1_1_0"/>
<dbReference type="OrthoDB" id="9807653at2"/>
<dbReference type="Proteomes" id="UP000000263">
    <property type="component" value="Chromosome"/>
</dbReference>
<dbReference type="GO" id="GO:0015935">
    <property type="term" value="C:small ribosomal subunit"/>
    <property type="evidence" value="ECO:0007669"/>
    <property type="project" value="InterPro"/>
</dbReference>
<dbReference type="GO" id="GO:0019843">
    <property type="term" value="F:rRNA binding"/>
    <property type="evidence" value="ECO:0007669"/>
    <property type="project" value="UniProtKB-UniRule"/>
</dbReference>
<dbReference type="GO" id="GO:0003735">
    <property type="term" value="F:structural constituent of ribosome"/>
    <property type="evidence" value="ECO:0007669"/>
    <property type="project" value="InterPro"/>
</dbReference>
<dbReference type="GO" id="GO:0000049">
    <property type="term" value="F:tRNA binding"/>
    <property type="evidence" value="ECO:0007669"/>
    <property type="project" value="UniProtKB-UniRule"/>
</dbReference>
<dbReference type="GO" id="GO:0006412">
    <property type="term" value="P:translation"/>
    <property type="evidence" value="ECO:0007669"/>
    <property type="project" value="UniProtKB-UniRule"/>
</dbReference>
<dbReference type="CDD" id="cd14869">
    <property type="entry name" value="uS7_Bacteria"/>
    <property type="match status" value="1"/>
</dbReference>
<dbReference type="FunFam" id="1.10.455.10:FF:000001">
    <property type="entry name" value="30S ribosomal protein S7"/>
    <property type="match status" value="1"/>
</dbReference>
<dbReference type="Gene3D" id="1.10.455.10">
    <property type="entry name" value="Ribosomal protein S7 domain"/>
    <property type="match status" value="1"/>
</dbReference>
<dbReference type="HAMAP" id="MF_00480_B">
    <property type="entry name" value="Ribosomal_uS7_B"/>
    <property type="match status" value="1"/>
</dbReference>
<dbReference type="InterPro" id="IPR000235">
    <property type="entry name" value="Ribosomal_uS7"/>
</dbReference>
<dbReference type="InterPro" id="IPR005717">
    <property type="entry name" value="Ribosomal_uS7_bac/org-type"/>
</dbReference>
<dbReference type="InterPro" id="IPR020606">
    <property type="entry name" value="Ribosomal_uS7_CS"/>
</dbReference>
<dbReference type="InterPro" id="IPR023798">
    <property type="entry name" value="Ribosomal_uS7_dom"/>
</dbReference>
<dbReference type="InterPro" id="IPR036823">
    <property type="entry name" value="Ribosomal_uS7_dom_sf"/>
</dbReference>
<dbReference type="NCBIfam" id="TIGR01029">
    <property type="entry name" value="rpsG_bact"/>
    <property type="match status" value="1"/>
</dbReference>
<dbReference type="PANTHER" id="PTHR11205">
    <property type="entry name" value="RIBOSOMAL PROTEIN S7"/>
    <property type="match status" value="1"/>
</dbReference>
<dbReference type="Pfam" id="PF00177">
    <property type="entry name" value="Ribosomal_S7"/>
    <property type="match status" value="1"/>
</dbReference>
<dbReference type="PIRSF" id="PIRSF002122">
    <property type="entry name" value="RPS7p_RPS7a_RPS5e_RPS7o"/>
    <property type="match status" value="1"/>
</dbReference>
<dbReference type="SUPFAM" id="SSF47973">
    <property type="entry name" value="Ribosomal protein S7"/>
    <property type="match status" value="1"/>
</dbReference>
<dbReference type="PROSITE" id="PS00052">
    <property type="entry name" value="RIBOSOMAL_S7"/>
    <property type="match status" value="1"/>
</dbReference>
<proteinExistence type="inferred from homology"/>
<accession>A7NR67</accession>
<feature type="chain" id="PRO_1000081297" description="Small ribosomal subunit protein uS7">
    <location>
        <begin position="1"/>
        <end position="157"/>
    </location>
</feature>
<evidence type="ECO:0000255" key="1">
    <source>
        <dbReference type="HAMAP-Rule" id="MF_00480"/>
    </source>
</evidence>
<evidence type="ECO:0000305" key="2"/>
<sequence length="157" mass="18035">MPRRGTIERRIPPPDPRYNSVLVQQFINKVMQRGKKSIAEKIVYQAFDLAAERLKKPAMEIFETAIRNAGPVIEVKPRRVGGATYQVPVEVKSDRRQSLAMRWLLMSARARSGKPMYERLAAELIDAYNNTGATIKRKEDVQRMAEANRAFSHYGRF</sequence>
<protein>
    <recommendedName>
        <fullName evidence="1">Small ribosomal subunit protein uS7</fullName>
    </recommendedName>
    <alternativeName>
        <fullName evidence="2">30S ribosomal protein S7</fullName>
    </alternativeName>
</protein>
<reference key="1">
    <citation type="submission" date="2007-08" db="EMBL/GenBank/DDBJ databases">
        <title>Complete sequence of Roseiflexus castenholzii DSM 13941.</title>
        <authorList>
            <consortium name="US DOE Joint Genome Institute"/>
            <person name="Copeland A."/>
            <person name="Lucas S."/>
            <person name="Lapidus A."/>
            <person name="Barry K."/>
            <person name="Glavina del Rio T."/>
            <person name="Dalin E."/>
            <person name="Tice H."/>
            <person name="Pitluck S."/>
            <person name="Thompson L.S."/>
            <person name="Brettin T."/>
            <person name="Bruce D."/>
            <person name="Detter J.C."/>
            <person name="Han C."/>
            <person name="Tapia R."/>
            <person name="Schmutz J."/>
            <person name="Larimer F."/>
            <person name="Land M."/>
            <person name="Hauser L."/>
            <person name="Kyrpides N."/>
            <person name="Mikhailova N."/>
            <person name="Bryant D.A."/>
            <person name="Hanada S."/>
            <person name="Tsukatani Y."/>
            <person name="Richardson P."/>
        </authorList>
    </citation>
    <scope>NUCLEOTIDE SEQUENCE [LARGE SCALE GENOMIC DNA]</scope>
    <source>
        <strain>DSM 13941 / HLO8</strain>
    </source>
</reference>
<comment type="function">
    <text evidence="1">One of the primary rRNA binding proteins, it binds directly to 16S rRNA where it nucleates assembly of the head domain of the 30S subunit. Is located at the subunit interface close to the decoding center, probably blocks exit of the E-site tRNA.</text>
</comment>
<comment type="subunit">
    <text evidence="1">Part of the 30S ribosomal subunit. Contacts proteins S9 and S11.</text>
</comment>
<comment type="similarity">
    <text evidence="1">Belongs to the universal ribosomal protein uS7 family.</text>
</comment>
<organism>
    <name type="scientific">Roseiflexus castenholzii (strain DSM 13941 / HLO8)</name>
    <dbReference type="NCBI Taxonomy" id="383372"/>
    <lineage>
        <taxon>Bacteria</taxon>
        <taxon>Bacillati</taxon>
        <taxon>Chloroflexota</taxon>
        <taxon>Chloroflexia</taxon>
        <taxon>Chloroflexales</taxon>
        <taxon>Roseiflexineae</taxon>
        <taxon>Roseiflexaceae</taxon>
        <taxon>Roseiflexus</taxon>
    </lineage>
</organism>
<keyword id="KW-1185">Reference proteome</keyword>
<keyword id="KW-0687">Ribonucleoprotein</keyword>
<keyword id="KW-0689">Ribosomal protein</keyword>
<keyword id="KW-0694">RNA-binding</keyword>
<keyword id="KW-0699">rRNA-binding</keyword>
<keyword id="KW-0820">tRNA-binding</keyword>